<evidence type="ECO:0000255" key="1">
    <source>
        <dbReference type="HAMAP-Rule" id="MF_00353"/>
    </source>
</evidence>
<protein>
    <recommendedName>
        <fullName evidence="1">Light-independent protochlorophyllide reductase subunit B</fullName>
        <shortName evidence="1">DPOR subunit B</shortName>
        <shortName evidence="1">LI-POR subunit B</shortName>
        <ecNumber evidence="1">1.3.7.7</ecNumber>
    </recommendedName>
</protein>
<reference key="1">
    <citation type="submission" date="2006-01" db="EMBL/GenBank/DDBJ databases">
        <title>Complete sequence of Rhodopseudomonas palustris HaA2.</title>
        <authorList>
            <consortium name="US DOE Joint Genome Institute"/>
            <person name="Copeland A."/>
            <person name="Lucas S."/>
            <person name="Lapidus A."/>
            <person name="Barry K."/>
            <person name="Detter J.C."/>
            <person name="Glavina T."/>
            <person name="Hammon N."/>
            <person name="Israni S."/>
            <person name="Pitluck S."/>
            <person name="Chain P."/>
            <person name="Malfatti S."/>
            <person name="Shin M."/>
            <person name="Vergez L."/>
            <person name="Schmutz J."/>
            <person name="Larimer F."/>
            <person name="Land M."/>
            <person name="Hauser L."/>
            <person name="Pelletier D.A."/>
            <person name="Kyrpides N."/>
            <person name="Anderson I."/>
            <person name="Oda Y."/>
            <person name="Harwood C.S."/>
            <person name="Richardson P."/>
        </authorList>
    </citation>
    <scope>NUCLEOTIDE SEQUENCE [LARGE SCALE GENOMIC DNA]</scope>
    <source>
        <strain>HaA2</strain>
    </source>
</reference>
<keyword id="KW-0004">4Fe-4S</keyword>
<keyword id="KW-0067">ATP-binding</keyword>
<keyword id="KW-0077">Bacteriochlorophyll biosynthesis</keyword>
<keyword id="KW-0149">Chlorophyll biosynthesis</keyword>
<keyword id="KW-0408">Iron</keyword>
<keyword id="KW-0411">Iron-sulfur</keyword>
<keyword id="KW-0479">Metal-binding</keyword>
<keyword id="KW-0547">Nucleotide-binding</keyword>
<keyword id="KW-0560">Oxidoreductase</keyword>
<keyword id="KW-0602">Photosynthesis</keyword>
<keyword id="KW-1185">Reference proteome</keyword>
<name>BCHB_RHOP2</name>
<organism>
    <name type="scientific">Rhodopseudomonas palustris (strain HaA2)</name>
    <dbReference type="NCBI Taxonomy" id="316058"/>
    <lineage>
        <taxon>Bacteria</taxon>
        <taxon>Pseudomonadati</taxon>
        <taxon>Pseudomonadota</taxon>
        <taxon>Alphaproteobacteria</taxon>
        <taxon>Hyphomicrobiales</taxon>
        <taxon>Nitrobacteraceae</taxon>
        <taxon>Rhodopseudomonas</taxon>
    </lineage>
</organism>
<dbReference type="EC" id="1.3.7.7" evidence="1"/>
<dbReference type="EMBL" id="CP000250">
    <property type="protein sequence ID" value="ABD08673.1"/>
    <property type="molecule type" value="Genomic_DNA"/>
</dbReference>
<dbReference type="RefSeq" id="WP_011442857.1">
    <property type="nucleotide sequence ID" value="NC_007778.1"/>
</dbReference>
<dbReference type="SMR" id="Q2ISY7"/>
<dbReference type="STRING" id="316058.RPB_3980"/>
<dbReference type="KEGG" id="rpb:RPB_3980"/>
<dbReference type="eggNOG" id="COG2710">
    <property type="taxonomic scope" value="Bacteria"/>
</dbReference>
<dbReference type="HOGENOM" id="CLU_025470_0_0_5"/>
<dbReference type="OrthoDB" id="5717231at2"/>
<dbReference type="UniPathway" id="UPA00671"/>
<dbReference type="Proteomes" id="UP000008809">
    <property type="component" value="Chromosome"/>
</dbReference>
<dbReference type="GO" id="GO:0051539">
    <property type="term" value="F:4 iron, 4 sulfur cluster binding"/>
    <property type="evidence" value="ECO:0007669"/>
    <property type="project" value="UniProtKB-UniRule"/>
</dbReference>
<dbReference type="GO" id="GO:0005524">
    <property type="term" value="F:ATP binding"/>
    <property type="evidence" value="ECO:0007669"/>
    <property type="project" value="UniProtKB-UniRule"/>
</dbReference>
<dbReference type="GO" id="GO:0046872">
    <property type="term" value="F:metal ion binding"/>
    <property type="evidence" value="ECO:0007669"/>
    <property type="project" value="UniProtKB-KW"/>
</dbReference>
<dbReference type="GO" id="GO:0016730">
    <property type="term" value="F:oxidoreductase activity, acting on iron-sulfur proteins as donors"/>
    <property type="evidence" value="ECO:0007669"/>
    <property type="project" value="InterPro"/>
</dbReference>
<dbReference type="GO" id="GO:0016636">
    <property type="term" value="F:oxidoreductase activity, acting on the CH-CH group of donors, iron-sulfur protein as acceptor"/>
    <property type="evidence" value="ECO:0007669"/>
    <property type="project" value="UniProtKB-UniRule"/>
</dbReference>
<dbReference type="GO" id="GO:0036070">
    <property type="term" value="P:light-independent bacteriochlorophyll biosynthetic process"/>
    <property type="evidence" value="ECO:0007669"/>
    <property type="project" value="UniProtKB-UniRule"/>
</dbReference>
<dbReference type="GO" id="GO:0019685">
    <property type="term" value="P:photosynthesis, dark reaction"/>
    <property type="evidence" value="ECO:0007669"/>
    <property type="project" value="InterPro"/>
</dbReference>
<dbReference type="Gene3D" id="1.20.89.20">
    <property type="match status" value="1"/>
</dbReference>
<dbReference type="Gene3D" id="3.40.50.1980">
    <property type="entry name" value="Nitrogenase molybdenum iron protein domain"/>
    <property type="match status" value="3"/>
</dbReference>
<dbReference type="Gene3D" id="1.10.8.550">
    <property type="entry name" value="Proto-chlorophyllide reductase 57 kD subunit B"/>
    <property type="match status" value="1"/>
</dbReference>
<dbReference type="HAMAP" id="MF_00353">
    <property type="entry name" value="ChlB_BchB"/>
    <property type="match status" value="1"/>
</dbReference>
<dbReference type="InterPro" id="IPR050152">
    <property type="entry name" value="ChlB/BchB/BchZ"/>
</dbReference>
<dbReference type="InterPro" id="IPR013580">
    <property type="entry name" value="LI-POR_suB-like_C"/>
</dbReference>
<dbReference type="InterPro" id="IPR000510">
    <property type="entry name" value="Nase/OxRdtase_comp1"/>
</dbReference>
<dbReference type="InterPro" id="IPR042298">
    <property type="entry name" value="P-CP_red_C"/>
</dbReference>
<dbReference type="InterPro" id="IPR005969">
    <property type="entry name" value="Protochl_reductB"/>
</dbReference>
<dbReference type="InterPro" id="IPR016209">
    <property type="entry name" value="Protochlorophyllide_Rdtase"/>
</dbReference>
<dbReference type="NCBIfam" id="TIGR01278">
    <property type="entry name" value="DPOR_BchB"/>
    <property type="match status" value="1"/>
</dbReference>
<dbReference type="PANTHER" id="PTHR33712">
    <property type="entry name" value="LIGHT-INDEPENDENT PROTOCHLOROPHYLLIDE REDUCTASE SUBUNIT B"/>
    <property type="match status" value="1"/>
</dbReference>
<dbReference type="PANTHER" id="PTHR33712:SF7">
    <property type="entry name" value="LIGHT-INDEPENDENT PROTOCHLOROPHYLLIDE REDUCTASE SUBUNIT B"/>
    <property type="match status" value="1"/>
</dbReference>
<dbReference type="Pfam" id="PF00148">
    <property type="entry name" value="Oxidored_nitro"/>
    <property type="match status" value="1"/>
</dbReference>
<dbReference type="Pfam" id="PF08369">
    <property type="entry name" value="PCP_red"/>
    <property type="match status" value="1"/>
</dbReference>
<dbReference type="PIRSF" id="PIRSF000163">
    <property type="entry name" value="PCP_ChlB"/>
    <property type="match status" value="1"/>
</dbReference>
<dbReference type="SUPFAM" id="SSF53807">
    <property type="entry name" value="Helical backbone' metal receptor"/>
    <property type="match status" value="1"/>
</dbReference>
<accession>Q2ISY7</accession>
<gene>
    <name evidence="1" type="primary">bchB</name>
    <name type="ordered locus">RPB_3980</name>
</gene>
<sequence length="541" mass="58488">MQLTVWTYEGPPHVGAMRIATGMEGLHYVLHAPQGDTYADLLFTMIERRNKRPPVTYTTFAARDLGRDTAELFMTAARDAYARFQPQAMIVGASCTGSLIQDDPGGLAKSLGFPIPVIAIDLPAYQRKENWGAAETFYQLVRALAGPNAPAPGTKRPERAAGVRPSCNLLGPTALGFRHRDDITEITGLLGKLGIDVNVVAPMGSTPADIARLGDADFNVVMYPEIAGQAASWLHRIFHQPFTKTVPIGVSATRDFIQEVTALAGIDPAPMLQASSSRLPWYSHSVDSTYLTNKRVFIFGDATHAIAAARIASEELGFKVVGLGSYSREFGRELREAAKRYDVEPLITDDYLEVEAKVAELHPELVLGTQMERHIAKRLGVPCAVISAPVHVQDFPARYAPQMGFEGANVIFDTWVHPLMMGLEEHLLTMFKDDFEFKDGAMPSHLGTGHAAPVAEAVAAPAAAVATESVATGVAAPDIASATAVAAAAAVWAPEAEKELQKIPFFVRGKARRNTERFANENGVATITVETLYDAKAHFAR</sequence>
<proteinExistence type="inferred from homology"/>
<feature type="chain" id="PRO_1000048416" description="Light-independent protochlorophyllide reductase subunit B">
    <location>
        <begin position="1"/>
        <end position="541"/>
    </location>
</feature>
<feature type="active site" description="Proton donor" evidence="1">
    <location>
        <position position="287"/>
    </location>
</feature>
<feature type="binding site" evidence="1">
    <location>
        <position position="36"/>
    </location>
    <ligand>
        <name>[4Fe-4S] cluster</name>
        <dbReference type="ChEBI" id="CHEBI:49883"/>
        <note>ligand shared with heterodimeric partner</note>
    </ligand>
</feature>
<feature type="binding site" evidence="1">
    <location>
        <begin position="422"/>
        <end position="423"/>
    </location>
    <ligand>
        <name>substrate</name>
    </ligand>
</feature>
<comment type="function">
    <text evidence="1">Component of the dark-operative protochlorophyllide reductase (DPOR) that uses Mg-ATP and reduced ferredoxin to reduce ring D of protochlorophyllide (Pchlide) to form chlorophyllide a (Chlide). This reaction is light-independent. The NB-protein (BchN-BchB) is the catalytic component of the complex.</text>
</comment>
<comment type="catalytic activity">
    <reaction evidence="1">
        <text>chlorophyllide a + oxidized 2[4Fe-4S]-[ferredoxin] + 2 ADP + 2 phosphate = protochlorophyllide a + reduced 2[4Fe-4S]-[ferredoxin] + 2 ATP + 2 H2O</text>
        <dbReference type="Rhea" id="RHEA:28202"/>
        <dbReference type="Rhea" id="RHEA-COMP:10002"/>
        <dbReference type="Rhea" id="RHEA-COMP:10004"/>
        <dbReference type="ChEBI" id="CHEBI:15377"/>
        <dbReference type="ChEBI" id="CHEBI:30616"/>
        <dbReference type="ChEBI" id="CHEBI:33722"/>
        <dbReference type="ChEBI" id="CHEBI:33723"/>
        <dbReference type="ChEBI" id="CHEBI:43474"/>
        <dbReference type="ChEBI" id="CHEBI:83348"/>
        <dbReference type="ChEBI" id="CHEBI:83350"/>
        <dbReference type="ChEBI" id="CHEBI:456216"/>
        <dbReference type="EC" id="1.3.7.7"/>
    </reaction>
</comment>
<comment type="cofactor">
    <cofactor evidence="1">
        <name>[4Fe-4S] cluster</name>
        <dbReference type="ChEBI" id="CHEBI:49883"/>
    </cofactor>
    <text evidence="1">Binds 1 [4Fe-4S] cluster per heterodimer. The cluster is bound at the heterodimer interface by residues from both subunits.</text>
</comment>
<comment type="pathway">
    <text evidence="1">Porphyrin-containing compound metabolism; bacteriochlorophyll biosynthesis (light-independent).</text>
</comment>
<comment type="subunit">
    <text evidence="1">Protochlorophyllide reductase is composed of three subunits; BchL, BchN and BchB. Forms a heterotetramer of two BchB and two BchN subunits.</text>
</comment>
<comment type="similarity">
    <text evidence="1">Belongs to the ChlB/BchB/BchZ family.</text>
</comment>